<keyword id="KW-0227">DNA damage</keyword>
<keyword id="KW-0234">DNA repair</keyword>
<keyword id="KW-0255">Endonuclease</keyword>
<keyword id="KW-0378">Hydrolase</keyword>
<keyword id="KW-0479">Metal-binding</keyword>
<keyword id="KW-0540">Nuclease</keyword>
<keyword id="KW-0862">Zinc</keyword>
<accession>A8GGT5</accession>
<gene>
    <name evidence="1" type="primary">nfo</name>
    <name type="ordered locus">Spro_3227</name>
</gene>
<organism>
    <name type="scientific">Serratia proteamaculans (strain 568)</name>
    <dbReference type="NCBI Taxonomy" id="399741"/>
    <lineage>
        <taxon>Bacteria</taxon>
        <taxon>Pseudomonadati</taxon>
        <taxon>Pseudomonadota</taxon>
        <taxon>Gammaproteobacteria</taxon>
        <taxon>Enterobacterales</taxon>
        <taxon>Yersiniaceae</taxon>
        <taxon>Serratia</taxon>
    </lineage>
</organism>
<protein>
    <recommendedName>
        <fullName evidence="1">Probable endonuclease 4</fullName>
        <ecNumber evidence="1">3.1.21.2</ecNumber>
    </recommendedName>
    <alternativeName>
        <fullName evidence="1">Endodeoxyribonuclease IV</fullName>
    </alternativeName>
    <alternativeName>
        <fullName evidence="1">Endonuclease IV</fullName>
    </alternativeName>
</protein>
<name>END4_SERP5</name>
<feature type="chain" id="PRO_1000058178" description="Probable endonuclease 4">
    <location>
        <begin position="1"/>
        <end position="279"/>
    </location>
</feature>
<feature type="binding site" evidence="1">
    <location>
        <position position="69"/>
    </location>
    <ligand>
        <name>Zn(2+)</name>
        <dbReference type="ChEBI" id="CHEBI:29105"/>
        <label>1</label>
    </ligand>
</feature>
<feature type="binding site" evidence="1">
    <location>
        <position position="109"/>
    </location>
    <ligand>
        <name>Zn(2+)</name>
        <dbReference type="ChEBI" id="CHEBI:29105"/>
        <label>1</label>
    </ligand>
</feature>
<feature type="binding site" evidence="1">
    <location>
        <position position="145"/>
    </location>
    <ligand>
        <name>Zn(2+)</name>
        <dbReference type="ChEBI" id="CHEBI:29105"/>
        <label>1</label>
    </ligand>
</feature>
<feature type="binding site" evidence="1">
    <location>
        <position position="145"/>
    </location>
    <ligand>
        <name>Zn(2+)</name>
        <dbReference type="ChEBI" id="CHEBI:29105"/>
        <label>2</label>
    </ligand>
</feature>
<feature type="binding site" evidence="1">
    <location>
        <position position="179"/>
    </location>
    <ligand>
        <name>Zn(2+)</name>
        <dbReference type="ChEBI" id="CHEBI:29105"/>
        <label>2</label>
    </ligand>
</feature>
<feature type="binding site" evidence="1">
    <location>
        <position position="182"/>
    </location>
    <ligand>
        <name>Zn(2+)</name>
        <dbReference type="ChEBI" id="CHEBI:29105"/>
        <label>3</label>
    </ligand>
</feature>
<feature type="binding site" evidence="1">
    <location>
        <position position="216"/>
    </location>
    <ligand>
        <name>Zn(2+)</name>
        <dbReference type="ChEBI" id="CHEBI:29105"/>
        <label>2</label>
    </ligand>
</feature>
<feature type="binding site" evidence="1">
    <location>
        <position position="229"/>
    </location>
    <ligand>
        <name>Zn(2+)</name>
        <dbReference type="ChEBI" id="CHEBI:29105"/>
        <label>3</label>
    </ligand>
</feature>
<feature type="binding site" evidence="1">
    <location>
        <position position="231"/>
    </location>
    <ligand>
        <name>Zn(2+)</name>
        <dbReference type="ChEBI" id="CHEBI:29105"/>
        <label>3</label>
    </ligand>
</feature>
<feature type="binding site" evidence="1">
    <location>
        <position position="261"/>
    </location>
    <ligand>
        <name>Zn(2+)</name>
        <dbReference type="ChEBI" id="CHEBI:29105"/>
        <label>2</label>
    </ligand>
</feature>
<proteinExistence type="inferred from homology"/>
<sequence length="279" mass="30862">MKFVGAHVSASGGVDQAVIRAHELEATAFALFTKNQRQWKAAPLPADVIDKFKSACAQYGYGPGQILPHDSYLINLGHPVTEALEKSREAFLDEMQRCEQLGLTLLNFHPGSHLMQIDEDKCLARIAESINLVLDKTSGVTAVIENTAGQGSNLGFKFEHLAAIIDGVEDKSRVGVCIDTCHAFAAGYDLRTEETCEQTFKELGEVVGFNYLRGMHLNDAKSEFGSRVDRHHSLGEGNIGKTVFSYIMRDPRFDKIPLILETVNPDIWAEEIAWLKAQQ</sequence>
<evidence type="ECO:0000255" key="1">
    <source>
        <dbReference type="HAMAP-Rule" id="MF_00152"/>
    </source>
</evidence>
<reference key="1">
    <citation type="submission" date="2007-09" db="EMBL/GenBank/DDBJ databases">
        <title>Complete sequence of chromosome of Serratia proteamaculans 568.</title>
        <authorList>
            <consortium name="US DOE Joint Genome Institute"/>
            <person name="Copeland A."/>
            <person name="Lucas S."/>
            <person name="Lapidus A."/>
            <person name="Barry K."/>
            <person name="Glavina del Rio T."/>
            <person name="Dalin E."/>
            <person name="Tice H."/>
            <person name="Pitluck S."/>
            <person name="Chain P."/>
            <person name="Malfatti S."/>
            <person name="Shin M."/>
            <person name="Vergez L."/>
            <person name="Schmutz J."/>
            <person name="Larimer F."/>
            <person name="Land M."/>
            <person name="Hauser L."/>
            <person name="Kyrpides N."/>
            <person name="Kim E."/>
            <person name="Taghavi S."/>
            <person name="Newman L."/>
            <person name="Vangronsveld J."/>
            <person name="van der Lelie D."/>
            <person name="Richardson P."/>
        </authorList>
    </citation>
    <scope>NUCLEOTIDE SEQUENCE [LARGE SCALE GENOMIC DNA]</scope>
    <source>
        <strain>568</strain>
    </source>
</reference>
<dbReference type="EC" id="3.1.21.2" evidence="1"/>
<dbReference type="EMBL" id="CP000826">
    <property type="protein sequence ID" value="ABV42325.1"/>
    <property type="molecule type" value="Genomic_DNA"/>
</dbReference>
<dbReference type="SMR" id="A8GGT5"/>
<dbReference type="STRING" id="399741.Spro_3227"/>
<dbReference type="KEGG" id="spe:Spro_3227"/>
<dbReference type="eggNOG" id="COG0648">
    <property type="taxonomic scope" value="Bacteria"/>
</dbReference>
<dbReference type="HOGENOM" id="CLU_025885_0_4_6"/>
<dbReference type="OrthoDB" id="9805666at2"/>
<dbReference type="GO" id="GO:0008833">
    <property type="term" value="F:deoxyribonuclease IV (phage-T4-induced) activity"/>
    <property type="evidence" value="ECO:0007669"/>
    <property type="project" value="UniProtKB-UniRule"/>
</dbReference>
<dbReference type="GO" id="GO:0003677">
    <property type="term" value="F:DNA binding"/>
    <property type="evidence" value="ECO:0007669"/>
    <property type="project" value="InterPro"/>
</dbReference>
<dbReference type="GO" id="GO:0003906">
    <property type="term" value="F:DNA-(apurinic or apyrimidinic site) endonuclease activity"/>
    <property type="evidence" value="ECO:0007669"/>
    <property type="project" value="TreeGrafter"/>
</dbReference>
<dbReference type="GO" id="GO:0008081">
    <property type="term" value="F:phosphoric diester hydrolase activity"/>
    <property type="evidence" value="ECO:0007669"/>
    <property type="project" value="TreeGrafter"/>
</dbReference>
<dbReference type="GO" id="GO:0008270">
    <property type="term" value="F:zinc ion binding"/>
    <property type="evidence" value="ECO:0007669"/>
    <property type="project" value="UniProtKB-UniRule"/>
</dbReference>
<dbReference type="GO" id="GO:0006284">
    <property type="term" value="P:base-excision repair"/>
    <property type="evidence" value="ECO:0007669"/>
    <property type="project" value="TreeGrafter"/>
</dbReference>
<dbReference type="CDD" id="cd00019">
    <property type="entry name" value="AP2Ec"/>
    <property type="match status" value="1"/>
</dbReference>
<dbReference type="FunFam" id="3.20.20.150:FF:000001">
    <property type="entry name" value="Probable endonuclease 4"/>
    <property type="match status" value="1"/>
</dbReference>
<dbReference type="Gene3D" id="3.20.20.150">
    <property type="entry name" value="Divalent-metal-dependent TIM barrel enzymes"/>
    <property type="match status" value="1"/>
</dbReference>
<dbReference type="HAMAP" id="MF_00152">
    <property type="entry name" value="Nfo"/>
    <property type="match status" value="1"/>
</dbReference>
<dbReference type="InterPro" id="IPR001719">
    <property type="entry name" value="AP_endonuc_2"/>
</dbReference>
<dbReference type="InterPro" id="IPR018246">
    <property type="entry name" value="AP_endonuc_F2_Zn_BS"/>
</dbReference>
<dbReference type="InterPro" id="IPR036237">
    <property type="entry name" value="Xyl_isomerase-like_sf"/>
</dbReference>
<dbReference type="InterPro" id="IPR013022">
    <property type="entry name" value="Xyl_isomerase-like_TIM-brl"/>
</dbReference>
<dbReference type="NCBIfam" id="TIGR00587">
    <property type="entry name" value="nfo"/>
    <property type="match status" value="1"/>
</dbReference>
<dbReference type="NCBIfam" id="NF002199">
    <property type="entry name" value="PRK01060.1-4"/>
    <property type="match status" value="1"/>
</dbReference>
<dbReference type="PANTHER" id="PTHR21445:SF0">
    <property type="entry name" value="APURINIC-APYRIMIDINIC ENDONUCLEASE"/>
    <property type="match status" value="1"/>
</dbReference>
<dbReference type="PANTHER" id="PTHR21445">
    <property type="entry name" value="ENDONUCLEASE IV ENDODEOXYRIBONUCLEASE IV"/>
    <property type="match status" value="1"/>
</dbReference>
<dbReference type="Pfam" id="PF01261">
    <property type="entry name" value="AP_endonuc_2"/>
    <property type="match status" value="1"/>
</dbReference>
<dbReference type="SMART" id="SM00518">
    <property type="entry name" value="AP2Ec"/>
    <property type="match status" value="1"/>
</dbReference>
<dbReference type="SUPFAM" id="SSF51658">
    <property type="entry name" value="Xylose isomerase-like"/>
    <property type="match status" value="1"/>
</dbReference>
<dbReference type="PROSITE" id="PS00729">
    <property type="entry name" value="AP_NUCLEASE_F2_1"/>
    <property type="match status" value="1"/>
</dbReference>
<dbReference type="PROSITE" id="PS00730">
    <property type="entry name" value="AP_NUCLEASE_F2_2"/>
    <property type="match status" value="1"/>
</dbReference>
<dbReference type="PROSITE" id="PS00731">
    <property type="entry name" value="AP_NUCLEASE_F2_3"/>
    <property type="match status" value="1"/>
</dbReference>
<dbReference type="PROSITE" id="PS51432">
    <property type="entry name" value="AP_NUCLEASE_F2_4"/>
    <property type="match status" value="1"/>
</dbReference>
<comment type="function">
    <text evidence="1">Endonuclease IV plays a role in DNA repair. It cleaves phosphodiester bonds at apurinic or apyrimidinic (AP) sites, generating a 3'-hydroxyl group and a 5'-terminal sugar phosphate.</text>
</comment>
<comment type="catalytic activity">
    <reaction evidence="1">
        <text>Endonucleolytic cleavage to 5'-phosphooligonucleotide end-products.</text>
        <dbReference type="EC" id="3.1.21.2"/>
    </reaction>
</comment>
<comment type="cofactor">
    <cofactor evidence="1">
        <name>Zn(2+)</name>
        <dbReference type="ChEBI" id="CHEBI:29105"/>
    </cofactor>
    <text evidence="1">Binds 3 Zn(2+) ions.</text>
</comment>
<comment type="similarity">
    <text evidence="1">Belongs to the AP endonuclease 2 family.</text>
</comment>